<reference key="1">
    <citation type="journal article" date="2009" name="Genome Res.">
        <title>Newly introduced genomic prophage islands are critical determinants of in vivo competitiveness in the Liverpool epidemic strain of Pseudomonas aeruginosa.</title>
        <authorList>
            <person name="Winstanley C."/>
            <person name="Langille M.G.I."/>
            <person name="Fothergill J.L."/>
            <person name="Kukavica-Ibrulj I."/>
            <person name="Paradis-Bleau C."/>
            <person name="Sanschagrin F."/>
            <person name="Thomson N.R."/>
            <person name="Winsor G.L."/>
            <person name="Quail M.A."/>
            <person name="Lennard N."/>
            <person name="Bignell A."/>
            <person name="Clarke L."/>
            <person name="Seeger K."/>
            <person name="Saunders D."/>
            <person name="Harris D."/>
            <person name="Parkhill J."/>
            <person name="Hancock R.E.W."/>
            <person name="Brinkman F.S.L."/>
            <person name="Levesque R.C."/>
        </authorList>
    </citation>
    <scope>NUCLEOTIDE SEQUENCE [LARGE SCALE GENOMIC DNA]</scope>
    <source>
        <strain>LESB58</strain>
    </source>
</reference>
<keyword id="KW-0687">Ribonucleoprotein</keyword>
<keyword id="KW-0689">Ribosomal protein</keyword>
<keyword id="KW-0694">RNA-binding</keyword>
<keyword id="KW-0699">rRNA-binding</keyword>
<gene>
    <name evidence="1" type="primary">rplN</name>
    <name type="ordered locus">PLES_06751</name>
</gene>
<organism>
    <name type="scientific">Pseudomonas aeruginosa (strain LESB58)</name>
    <dbReference type="NCBI Taxonomy" id="557722"/>
    <lineage>
        <taxon>Bacteria</taxon>
        <taxon>Pseudomonadati</taxon>
        <taxon>Pseudomonadota</taxon>
        <taxon>Gammaproteobacteria</taxon>
        <taxon>Pseudomonadales</taxon>
        <taxon>Pseudomonadaceae</taxon>
        <taxon>Pseudomonas</taxon>
    </lineage>
</organism>
<comment type="function">
    <text evidence="1">Binds to 23S rRNA. Forms part of two intersubunit bridges in the 70S ribosome.</text>
</comment>
<comment type="subunit">
    <text evidence="1">Part of the 50S ribosomal subunit. Forms a cluster with proteins L3 and L19. In the 70S ribosome, L14 and L19 interact and together make contacts with the 16S rRNA in bridges B5 and B8.</text>
</comment>
<comment type="similarity">
    <text evidence="1">Belongs to the universal ribosomal protein uL14 family.</text>
</comment>
<evidence type="ECO:0000255" key="1">
    <source>
        <dbReference type="HAMAP-Rule" id="MF_01367"/>
    </source>
</evidence>
<evidence type="ECO:0000305" key="2"/>
<dbReference type="EMBL" id="FM209186">
    <property type="protein sequence ID" value="CAW25402.1"/>
    <property type="molecule type" value="Genomic_DNA"/>
</dbReference>
<dbReference type="RefSeq" id="WP_003093714.1">
    <property type="nucleotide sequence ID" value="NC_011770.1"/>
</dbReference>
<dbReference type="SMR" id="B7V654"/>
<dbReference type="GeneID" id="77219208"/>
<dbReference type="KEGG" id="pag:PLES_06751"/>
<dbReference type="HOGENOM" id="CLU_095071_2_1_6"/>
<dbReference type="GO" id="GO:0022625">
    <property type="term" value="C:cytosolic large ribosomal subunit"/>
    <property type="evidence" value="ECO:0007669"/>
    <property type="project" value="TreeGrafter"/>
</dbReference>
<dbReference type="GO" id="GO:0070180">
    <property type="term" value="F:large ribosomal subunit rRNA binding"/>
    <property type="evidence" value="ECO:0007669"/>
    <property type="project" value="TreeGrafter"/>
</dbReference>
<dbReference type="GO" id="GO:0003735">
    <property type="term" value="F:structural constituent of ribosome"/>
    <property type="evidence" value="ECO:0007669"/>
    <property type="project" value="InterPro"/>
</dbReference>
<dbReference type="GO" id="GO:0006412">
    <property type="term" value="P:translation"/>
    <property type="evidence" value="ECO:0007669"/>
    <property type="project" value="UniProtKB-UniRule"/>
</dbReference>
<dbReference type="CDD" id="cd00337">
    <property type="entry name" value="Ribosomal_uL14"/>
    <property type="match status" value="1"/>
</dbReference>
<dbReference type="FunFam" id="2.40.150.20:FF:000001">
    <property type="entry name" value="50S ribosomal protein L14"/>
    <property type="match status" value="1"/>
</dbReference>
<dbReference type="Gene3D" id="2.40.150.20">
    <property type="entry name" value="Ribosomal protein L14"/>
    <property type="match status" value="1"/>
</dbReference>
<dbReference type="HAMAP" id="MF_01367">
    <property type="entry name" value="Ribosomal_uL14"/>
    <property type="match status" value="1"/>
</dbReference>
<dbReference type="InterPro" id="IPR000218">
    <property type="entry name" value="Ribosomal_uL14"/>
</dbReference>
<dbReference type="InterPro" id="IPR005745">
    <property type="entry name" value="Ribosomal_uL14_bac-type"/>
</dbReference>
<dbReference type="InterPro" id="IPR019972">
    <property type="entry name" value="Ribosomal_uL14_CS"/>
</dbReference>
<dbReference type="InterPro" id="IPR036853">
    <property type="entry name" value="Ribosomal_uL14_sf"/>
</dbReference>
<dbReference type="NCBIfam" id="TIGR01067">
    <property type="entry name" value="rplN_bact"/>
    <property type="match status" value="1"/>
</dbReference>
<dbReference type="PANTHER" id="PTHR11761">
    <property type="entry name" value="50S/60S RIBOSOMAL PROTEIN L14/L23"/>
    <property type="match status" value="1"/>
</dbReference>
<dbReference type="PANTHER" id="PTHR11761:SF3">
    <property type="entry name" value="LARGE RIBOSOMAL SUBUNIT PROTEIN UL14M"/>
    <property type="match status" value="1"/>
</dbReference>
<dbReference type="Pfam" id="PF00238">
    <property type="entry name" value="Ribosomal_L14"/>
    <property type="match status" value="1"/>
</dbReference>
<dbReference type="SMART" id="SM01374">
    <property type="entry name" value="Ribosomal_L14"/>
    <property type="match status" value="1"/>
</dbReference>
<dbReference type="SUPFAM" id="SSF50193">
    <property type="entry name" value="Ribosomal protein L14"/>
    <property type="match status" value="1"/>
</dbReference>
<dbReference type="PROSITE" id="PS00049">
    <property type="entry name" value="RIBOSOMAL_L14"/>
    <property type="match status" value="1"/>
</dbReference>
<feature type="chain" id="PRO_1000144314" description="Large ribosomal subunit protein uL14">
    <location>
        <begin position="1"/>
        <end position="122"/>
    </location>
</feature>
<name>RL14_PSEA8</name>
<proteinExistence type="inferred from homology"/>
<accession>B7V654</accession>
<sequence>MIQTQSMLDVADNSGARRVMCIKVLGGSHRRYAGIGDIIKVTVKEAIPRGKVKKGQVMTAVVVRTKHGVRRTDGSIIRFDGNAAVLLNNKQEPIGTRIFGPVTRELRTEKFMKIVSLAPEVL</sequence>
<protein>
    <recommendedName>
        <fullName evidence="1">Large ribosomal subunit protein uL14</fullName>
    </recommendedName>
    <alternativeName>
        <fullName evidence="2">50S ribosomal protein L14</fullName>
    </alternativeName>
</protein>